<proteinExistence type="inferred from homology"/>
<feature type="chain" id="PRO_1000148004" description="Protein SlyX homolog">
    <location>
        <begin position="1"/>
        <end position="68"/>
    </location>
</feature>
<name>SLYX_BRUMB</name>
<reference key="1">
    <citation type="submission" date="2009-03" db="EMBL/GenBank/DDBJ databases">
        <title>Brucella melitensis ATCC 23457 whole genome shotgun sequencing project.</title>
        <authorList>
            <person name="Setubal J.C."/>
            <person name="Boyle S."/>
            <person name="Crasta O.R."/>
            <person name="Gillespie J.J."/>
            <person name="Kenyon R.W."/>
            <person name="Lu J."/>
            <person name="Mane S."/>
            <person name="Nagrani S."/>
            <person name="Shallom J.M."/>
            <person name="Shallom S."/>
            <person name="Shukla M."/>
            <person name="Snyder E.E."/>
            <person name="Sobral B.W."/>
            <person name="Wattam A.R."/>
            <person name="Will R."/>
            <person name="Williams K."/>
            <person name="Yoo H."/>
            <person name="Munk C."/>
            <person name="Tapia R."/>
            <person name="Han C."/>
            <person name="Detter J.C."/>
            <person name="Bruce D."/>
            <person name="Brettin T.S."/>
        </authorList>
    </citation>
    <scope>NUCLEOTIDE SEQUENCE [LARGE SCALE GENOMIC DNA]</scope>
    <source>
        <strain>ATCC 23457</strain>
    </source>
</reference>
<sequence length="68" mass="7873">MSAEERLIELEIRVAEQEKTIDELSSVLTEQWKTVDQLSKKLNALTNRFLELEEQAAPDVPVTKPPHW</sequence>
<accession>C0RMK5</accession>
<organism>
    <name type="scientific">Brucella melitensis biotype 2 (strain ATCC 23457)</name>
    <dbReference type="NCBI Taxonomy" id="546272"/>
    <lineage>
        <taxon>Bacteria</taxon>
        <taxon>Pseudomonadati</taxon>
        <taxon>Pseudomonadota</taxon>
        <taxon>Alphaproteobacteria</taxon>
        <taxon>Hyphomicrobiales</taxon>
        <taxon>Brucellaceae</taxon>
        <taxon>Brucella/Ochrobactrum group</taxon>
        <taxon>Brucella</taxon>
    </lineage>
</organism>
<dbReference type="EMBL" id="CP001489">
    <property type="protein sequence ID" value="ACO02838.1"/>
    <property type="molecule type" value="Genomic_DNA"/>
</dbReference>
<dbReference type="RefSeq" id="WP_002965586.1">
    <property type="nucleotide sequence ID" value="NC_012442.1"/>
</dbReference>
<dbReference type="SMR" id="C0RMK5"/>
<dbReference type="KEGG" id="bmi:BMEA_B1055"/>
<dbReference type="HOGENOM" id="CLU_180796_5_0_5"/>
<dbReference type="Proteomes" id="UP000001748">
    <property type="component" value="Chromosome II"/>
</dbReference>
<dbReference type="Gene3D" id="1.20.5.300">
    <property type="match status" value="1"/>
</dbReference>
<dbReference type="HAMAP" id="MF_00715">
    <property type="entry name" value="SlyX"/>
    <property type="match status" value="1"/>
</dbReference>
<dbReference type="InterPro" id="IPR007236">
    <property type="entry name" value="SlyX"/>
</dbReference>
<dbReference type="NCBIfam" id="NF001962">
    <property type="entry name" value="PRK00736.1"/>
    <property type="match status" value="1"/>
</dbReference>
<dbReference type="PANTHER" id="PTHR36508">
    <property type="entry name" value="PROTEIN SLYX"/>
    <property type="match status" value="1"/>
</dbReference>
<dbReference type="PANTHER" id="PTHR36508:SF1">
    <property type="entry name" value="PROTEIN SLYX"/>
    <property type="match status" value="1"/>
</dbReference>
<dbReference type="Pfam" id="PF04102">
    <property type="entry name" value="SlyX"/>
    <property type="match status" value="1"/>
</dbReference>
<gene>
    <name evidence="1" type="primary">slyX</name>
    <name type="ordered locus">BMEA_B1055</name>
</gene>
<comment type="similarity">
    <text evidence="1">Belongs to the SlyX family.</text>
</comment>
<protein>
    <recommendedName>
        <fullName evidence="1">Protein SlyX homolog</fullName>
    </recommendedName>
</protein>
<evidence type="ECO:0000255" key="1">
    <source>
        <dbReference type="HAMAP-Rule" id="MF_00715"/>
    </source>
</evidence>